<feature type="chain" id="PRO_0000391041" description="UPF0761 membrane protein NMCC_0461">
    <location>
        <begin position="1"/>
        <end position="408"/>
    </location>
</feature>
<feature type="transmembrane region" description="Helical" evidence="1">
    <location>
        <begin position="43"/>
        <end position="63"/>
    </location>
</feature>
<feature type="transmembrane region" description="Helical" evidence="1">
    <location>
        <begin position="100"/>
        <end position="120"/>
    </location>
</feature>
<feature type="transmembrane region" description="Helical" evidence="1">
    <location>
        <begin position="139"/>
        <end position="159"/>
    </location>
</feature>
<feature type="transmembrane region" description="Helical" evidence="1">
    <location>
        <begin position="176"/>
        <end position="196"/>
    </location>
</feature>
<feature type="transmembrane region" description="Helical" evidence="1">
    <location>
        <begin position="210"/>
        <end position="230"/>
    </location>
</feature>
<feature type="transmembrane region" description="Helical" evidence="1">
    <location>
        <begin position="248"/>
        <end position="268"/>
    </location>
</feature>
<protein>
    <recommendedName>
        <fullName evidence="1">UPF0761 membrane protein NMCC_0461</fullName>
    </recommendedName>
</protein>
<keyword id="KW-0997">Cell inner membrane</keyword>
<keyword id="KW-1003">Cell membrane</keyword>
<keyword id="KW-0472">Membrane</keyword>
<keyword id="KW-0812">Transmembrane</keyword>
<keyword id="KW-1133">Transmembrane helix</keyword>
<gene>
    <name type="ordered locus">NMCC_0461</name>
</gene>
<comment type="subcellular location">
    <subcellularLocation>
        <location evidence="1">Cell inner membrane</location>
        <topology evidence="1">Multi-pass membrane protein</topology>
    </subcellularLocation>
</comment>
<comment type="similarity">
    <text evidence="1">Belongs to the UPF0761 family.</text>
</comment>
<comment type="sequence caution" evidence="2">
    <conflict type="erroneous initiation">
        <sequence resource="EMBL-CDS" id="ABX72663"/>
    </conflict>
</comment>
<accession>A9M1Y8</accession>
<evidence type="ECO:0000255" key="1">
    <source>
        <dbReference type="HAMAP-Rule" id="MF_00672"/>
    </source>
</evidence>
<evidence type="ECO:0000305" key="2"/>
<dbReference type="EMBL" id="CP000381">
    <property type="protein sequence ID" value="ABX72663.1"/>
    <property type="status" value="ALT_INIT"/>
    <property type="molecule type" value="Genomic_DNA"/>
</dbReference>
<dbReference type="RefSeq" id="WP_002217875.1">
    <property type="nucleotide sequence ID" value="NC_010120.1"/>
</dbReference>
<dbReference type="SMR" id="A9M1Y8"/>
<dbReference type="KEGG" id="nmn:NMCC_0461"/>
<dbReference type="HOGENOM" id="CLU_032288_1_0_4"/>
<dbReference type="Proteomes" id="UP000001177">
    <property type="component" value="Chromosome"/>
</dbReference>
<dbReference type="GO" id="GO:0005886">
    <property type="term" value="C:plasma membrane"/>
    <property type="evidence" value="ECO:0007669"/>
    <property type="project" value="UniProtKB-SubCell"/>
</dbReference>
<dbReference type="HAMAP" id="MF_00672">
    <property type="entry name" value="UPF0761"/>
    <property type="match status" value="1"/>
</dbReference>
<dbReference type="InterPro" id="IPR023679">
    <property type="entry name" value="UPF0761_bac"/>
</dbReference>
<dbReference type="InterPro" id="IPR017039">
    <property type="entry name" value="Virul_fac_BrkB"/>
</dbReference>
<dbReference type="NCBIfam" id="NF003256">
    <property type="entry name" value="PRK04214.1"/>
    <property type="match status" value="1"/>
</dbReference>
<dbReference type="NCBIfam" id="TIGR00765">
    <property type="entry name" value="yihY_not_rbn"/>
    <property type="match status" value="1"/>
</dbReference>
<dbReference type="PANTHER" id="PTHR30213">
    <property type="entry name" value="INNER MEMBRANE PROTEIN YHJD"/>
    <property type="match status" value="1"/>
</dbReference>
<dbReference type="PANTHER" id="PTHR30213:SF0">
    <property type="entry name" value="UPF0761 MEMBRANE PROTEIN YIHY"/>
    <property type="match status" value="1"/>
</dbReference>
<dbReference type="Pfam" id="PF03631">
    <property type="entry name" value="Virul_fac_BrkB"/>
    <property type="match status" value="1"/>
</dbReference>
<reference key="1">
    <citation type="journal article" date="2008" name="Genomics">
        <title>Characterization of ST-4821 complex, a unique Neisseria meningitidis clone.</title>
        <authorList>
            <person name="Peng J."/>
            <person name="Yang L."/>
            <person name="Yang F."/>
            <person name="Yang J."/>
            <person name="Yan Y."/>
            <person name="Nie H."/>
            <person name="Zhang X."/>
            <person name="Xiong Z."/>
            <person name="Jiang Y."/>
            <person name="Cheng F."/>
            <person name="Xu X."/>
            <person name="Chen S."/>
            <person name="Sun L."/>
            <person name="Li W."/>
            <person name="Shen Y."/>
            <person name="Shao Z."/>
            <person name="Liang X."/>
            <person name="Xu J."/>
            <person name="Jin Q."/>
        </authorList>
    </citation>
    <scope>NUCLEOTIDE SEQUENCE [LARGE SCALE GENOMIC DNA]</scope>
    <source>
        <strain>053442</strain>
    </source>
</reference>
<name>Y461_NEIM0</name>
<sequence length="408" mass="46105">MTFLQRLQGLADNKICAFAWFVVRRFDEERVPQAAASMTFTTLLALVPVLTVMVAVASIFPVFDRWSDSFVSFVNQTIVPQGADMVFDYINAFREQANRLTAIGSVMLVVTSLMLIRTIDNTFNRIWRVNSQRPWMMQFLVYWALLTFGPLSLGVGISFMVGSVQDAALASGAPQWSGALRTAATLTFMTLLLWGLYRFVPNRFVPARQAFVGALATAFCLETARSLFTWYMGNFDGYRSIYGAFAAVPFFLLWLNLLWTLVLGGAVLTSSLSYWQGEAFRRGFDSRGRFDDVLKILLLLDAAQKEGKALPVQEFRRHINMGYDELGELLEKLARHGYIYSGRQGWVLKTGADSIELNELFKLFVYRPLPVERDHVNQAVDAVMMPCLQTLNMTLAEFDAQAKKQQQS</sequence>
<proteinExistence type="inferred from homology"/>
<organism>
    <name type="scientific">Neisseria meningitidis serogroup C (strain 053442)</name>
    <dbReference type="NCBI Taxonomy" id="374833"/>
    <lineage>
        <taxon>Bacteria</taxon>
        <taxon>Pseudomonadati</taxon>
        <taxon>Pseudomonadota</taxon>
        <taxon>Betaproteobacteria</taxon>
        <taxon>Neisseriales</taxon>
        <taxon>Neisseriaceae</taxon>
        <taxon>Neisseria</taxon>
    </lineage>
</organism>